<dbReference type="EMBL" id="BA000037">
    <property type="protein sequence ID" value="BAC94888.1"/>
    <property type="molecule type" value="Genomic_DNA"/>
</dbReference>
<dbReference type="RefSeq" id="WP_011080103.1">
    <property type="nucleotide sequence ID" value="NC_005139.1"/>
</dbReference>
<dbReference type="SMR" id="Q7MJN7"/>
<dbReference type="STRING" id="672.VV93_v1c18870"/>
<dbReference type="KEGG" id="vvy:VV2124"/>
<dbReference type="eggNOG" id="COG1495">
    <property type="taxonomic scope" value="Bacteria"/>
</dbReference>
<dbReference type="HOGENOM" id="CLU_098660_2_0_6"/>
<dbReference type="Proteomes" id="UP000002675">
    <property type="component" value="Chromosome I"/>
</dbReference>
<dbReference type="GO" id="GO:0005886">
    <property type="term" value="C:plasma membrane"/>
    <property type="evidence" value="ECO:0007669"/>
    <property type="project" value="UniProtKB-SubCell"/>
</dbReference>
<dbReference type="GO" id="GO:0009055">
    <property type="term" value="F:electron transfer activity"/>
    <property type="evidence" value="ECO:0007669"/>
    <property type="project" value="UniProtKB-UniRule"/>
</dbReference>
<dbReference type="GO" id="GO:0015035">
    <property type="term" value="F:protein-disulfide reductase activity"/>
    <property type="evidence" value="ECO:0007669"/>
    <property type="project" value="UniProtKB-UniRule"/>
</dbReference>
<dbReference type="GO" id="GO:0006457">
    <property type="term" value="P:protein folding"/>
    <property type="evidence" value="ECO:0007669"/>
    <property type="project" value="InterPro"/>
</dbReference>
<dbReference type="Gene3D" id="1.20.1550.10">
    <property type="entry name" value="DsbB-like"/>
    <property type="match status" value="1"/>
</dbReference>
<dbReference type="HAMAP" id="MF_00286">
    <property type="entry name" value="DsbB"/>
    <property type="match status" value="1"/>
</dbReference>
<dbReference type="InterPro" id="IPR003752">
    <property type="entry name" value="DiS_bond_form_DsbB/BdbC"/>
</dbReference>
<dbReference type="InterPro" id="IPR022920">
    <property type="entry name" value="Disulphide_bond_form_DsbB"/>
</dbReference>
<dbReference type="InterPro" id="IPR050183">
    <property type="entry name" value="DsbB"/>
</dbReference>
<dbReference type="InterPro" id="IPR023380">
    <property type="entry name" value="DsbB-like_sf"/>
</dbReference>
<dbReference type="NCBIfam" id="NF002485">
    <property type="entry name" value="PRK01749.1"/>
    <property type="match status" value="1"/>
</dbReference>
<dbReference type="PANTHER" id="PTHR36570">
    <property type="entry name" value="DISULFIDE BOND FORMATION PROTEIN B"/>
    <property type="match status" value="1"/>
</dbReference>
<dbReference type="PANTHER" id="PTHR36570:SF2">
    <property type="entry name" value="DISULFIDE BOND FORMATION PROTEIN B"/>
    <property type="match status" value="1"/>
</dbReference>
<dbReference type="Pfam" id="PF02600">
    <property type="entry name" value="DsbB"/>
    <property type="match status" value="1"/>
</dbReference>
<dbReference type="SUPFAM" id="SSF158442">
    <property type="entry name" value="DsbB-like"/>
    <property type="match status" value="1"/>
</dbReference>
<reference key="1">
    <citation type="journal article" date="2003" name="Genome Res.">
        <title>Comparative genome analysis of Vibrio vulnificus, a marine pathogen.</title>
        <authorList>
            <person name="Chen C.-Y."/>
            <person name="Wu K.-M."/>
            <person name="Chang Y.-C."/>
            <person name="Chang C.-H."/>
            <person name="Tsai H.-C."/>
            <person name="Liao T.-L."/>
            <person name="Liu Y.-M."/>
            <person name="Chen H.-J."/>
            <person name="Shen A.B.-T."/>
            <person name="Li J.-C."/>
            <person name="Su T.-L."/>
            <person name="Shao C.-P."/>
            <person name="Lee C.-T."/>
            <person name="Hor L.-I."/>
            <person name="Tsai S.-F."/>
        </authorList>
    </citation>
    <scope>NUCLEOTIDE SEQUENCE [LARGE SCALE GENOMIC DNA]</scope>
    <source>
        <strain>YJ016</strain>
    </source>
</reference>
<gene>
    <name evidence="1" type="primary">dsbB</name>
    <name type="ordered locus">VV2124</name>
</gene>
<name>DSBB_VIBVY</name>
<protein>
    <recommendedName>
        <fullName evidence="1">Disulfide bond formation protein B</fullName>
    </recommendedName>
    <alternativeName>
        <fullName evidence="1">Disulfide oxidoreductase</fullName>
    </alternativeName>
</protein>
<accession>Q7MJN7</accession>
<sequence>MNLFASLNQFSKNRISWLLLLLFVVFFEGAALFFQHVMMLSPCVMCIYERVAMLGVGGAALFGLIAPNNPLVRWLGLAAWGASAYKGLALSLQHVDYQFNPSPFATCDLFVTFPDWAPLNQWAPWMFEAYGDCSKIVWQFMTLSMPQWLVIIFAGNLVALAFIVIAQFFKSK</sequence>
<proteinExistence type="inferred from homology"/>
<evidence type="ECO:0000255" key="1">
    <source>
        <dbReference type="HAMAP-Rule" id="MF_00286"/>
    </source>
</evidence>
<keyword id="KW-0997">Cell inner membrane</keyword>
<keyword id="KW-1003">Cell membrane</keyword>
<keyword id="KW-0143">Chaperone</keyword>
<keyword id="KW-1015">Disulfide bond</keyword>
<keyword id="KW-0249">Electron transport</keyword>
<keyword id="KW-0472">Membrane</keyword>
<keyword id="KW-0560">Oxidoreductase</keyword>
<keyword id="KW-0676">Redox-active center</keyword>
<keyword id="KW-0812">Transmembrane</keyword>
<keyword id="KW-1133">Transmembrane helix</keyword>
<keyword id="KW-0813">Transport</keyword>
<comment type="function">
    <text evidence="1">Required for disulfide bond formation in some periplasmic proteins. Acts by oxidizing the DsbA protein.</text>
</comment>
<comment type="subcellular location">
    <subcellularLocation>
        <location evidence="1">Cell inner membrane</location>
        <topology evidence="1">Multi-pass membrane protein</topology>
    </subcellularLocation>
</comment>
<comment type="similarity">
    <text evidence="1">Belongs to the DsbB family.</text>
</comment>
<organism>
    <name type="scientific">Vibrio vulnificus (strain YJ016)</name>
    <dbReference type="NCBI Taxonomy" id="196600"/>
    <lineage>
        <taxon>Bacteria</taxon>
        <taxon>Pseudomonadati</taxon>
        <taxon>Pseudomonadota</taxon>
        <taxon>Gammaproteobacteria</taxon>
        <taxon>Vibrionales</taxon>
        <taxon>Vibrionaceae</taxon>
        <taxon>Vibrio</taxon>
    </lineage>
</organism>
<feature type="chain" id="PRO_0000059364" description="Disulfide bond formation protein B">
    <location>
        <begin position="1"/>
        <end position="172"/>
    </location>
</feature>
<feature type="topological domain" description="Cytoplasmic" evidence="1">
    <location>
        <begin position="1"/>
        <end position="16"/>
    </location>
</feature>
<feature type="transmembrane region" description="Helical" evidence="1">
    <location>
        <begin position="17"/>
        <end position="33"/>
    </location>
</feature>
<feature type="topological domain" description="Periplasmic" evidence="1">
    <location>
        <begin position="34"/>
        <end position="51"/>
    </location>
</feature>
<feature type="transmembrane region" description="Helical" evidence="1">
    <location>
        <begin position="52"/>
        <end position="67"/>
    </location>
</feature>
<feature type="topological domain" description="Cytoplasmic" evidence="1">
    <location>
        <begin position="68"/>
        <end position="74"/>
    </location>
</feature>
<feature type="transmembrane region" description="Helical" evidence="1">
    <location>
        <begin position="75"/>
        <end position="92"/>
    </location>
</feature>
<feature type="topological domain" description="Periplasmic" evidence="1">
    <location>
        <begin position="93"/>
        <end position="147"/>
    </location>
</feature>
<feature type="transmembrane region" description="Helical" evidence="1">
    <location>
        <begin position="148"/>
        <end position="166"/>
    </location>
</feature>
<feature type="topological domain" description="Cytoplasmic" evidence="1">
    <location>
        <begin position="167"/>
        <end position="172"/>
    </location>
</feature>
<feature type="disulfide bond" description="Redox-active" evidence="1">
    <location>
        <begin position="43"/>
        <end position="46"/>
    </location>
</feature>
<feature type="disulfide bond" description="Redox-active" evidence="1">
    <location>
        <begin position="107"/>
        <end position="133"/>
    </location>
</feature>